<organism>
    <name type="scientific">Staurastrum punctulatum</name>
    <name type="common">Green alga</name>
    <name type="synonym">Cosmoastrum punctulatum</name>
    <dbReference type="NCBI Taxonomy" id="102822"/>
    <lineage>
        <taxon>Eukaryota</taxon>
        <taxon>Viridiplantae</taxon>
        <taxon>Streptophyta</taxon>
        <taxon>Zygnematophyceae</taxon>
        <taxon>Zygnematophycidae</taxon>
        <taxon>Desmidiales</taxon>
        <taxon>Desmidiaceae</taxon>
        <taxon>Staurastrum</taxon>
    </lineage>
</organism>
<evidence type="ECO:0000255" key="1">
    <source>
        <dbReference type="HAMAP-Rule" id="MF_00432"/>
    </source>
</evidence>
<geneLocation type="chloroplast"/>
<gene>
    <name evidence="1" type="primary">petG</name>
</gene>
<keyword id="KW-0150">Chloroplast</keyword>
<keyword id="KW-0249">Electron transport</keyword>
<keyword id="KW-0472">Membrane</keyword>
<keyword id="KW-0602">Photosynthesis</keyword>
<keyword id="KW-0934">Plastid</keyword>
<keyword id="KW-0793">Thylakoid</keyword>
<keyword id="KW-0812">Transmembrane</keyword>
<keyword id="KW-1133">Transmembrane helix</keyword>
<keyword id="KW-0813">Transport</keyword>
<accession>Q32RT5</accession>
<protein>
    <recommendedName>
        <fullName evidence="1">Cytochrome b6-f complex subunit 5</fullName>
    </recommendedName>
    <alternativeName>
        <fullName evidence="1">Cytochrome b6-f complex subunit PetG</fullName>
    </alternativeName>
    <alternativeName>
        <fullName evidence="1">Cytochrome b6-f complex subunit V</fullName>
    </alternativeName>
</protein>
<feature type="chain" id="PRO_0000275511" description="Cytochrome b6-f complex subunit 5">
    <location>
        <begin position="1"/>
        <end position="37"/>
    </location>
</feature>
<feature type="transmembrane region" description="Helical" evidence="1">
    <location>
        <begin position="5"/>
        <end position="25"/>
    </location>
</feature>
<name>PETG_STAPU</name>
<proteinExistence type="inferred from homology"/>
<dbReference type="EMBL" id="AY958085">
    <property type="protein sequence ID" value="AAX45712.1"/>
    <property type="molecule type" value="Genomic_DNA"/>
</dbReference>
<dbReference type="RefSeq" id="YP_636441.1">
    <property type="nucleotide sequence ID" value="NC_008116.1"/>
</dbReference>
<dbReference type="SMR" id="Q32RT5"/>
<dbReference type="GeneID" id="4108553"/>
<dbReference type="GO" id="GO:0009535">
    <property type="term" value="C:chloroplast thylakoid membrane"/>
    <property type="evidence" value="ECO:0007669"/>
    <property type="project" value="UniProtKB-SubCell"/>
</dbReference>
<dbReference type="GO" id="GO:0009512">
    <property type="term" value="C:cytochrome b6f complex"/>
    <property type="evidence" value="ECO:0007669"/>
    <property type="project" value="InterPro"/>
</dbReference>
<dbReference type="GO" id="GO:0045158">
    <property type="term" value="F:electron transporter, transferring electrons within cytochrome b6/f complex of photosystem II activity"/>
    <property type="evidence" value="ECO:0007669"/>
    <property type="project" value="UniProtKB-UniRule"/>
</dbReference>
<dbReference type="GO" id="GO:0017004">
    <property type="term" value="P:cytochrome complex assembly"/>
    <property type="evidence" value="ECO:0007669"/>
    <property type="project" value="UniProtKB-UniRule"/>
</dbReference>
<dbReference type="GO" id="GO:0015979">
    <property type="term" value="P:photosynthesis"/>
    <property type="evidence" value="ECO:0007669"/>
    <property type="project" value="UniProtKB-KW"/>
</dbReference>
<dbReference type="HAMAP" id="MF_00432">
    <property type="entry name" value="Cytb6_f_PetG"/>
    <property type="match status" value="1"/>
</dbReference>
<dbReference type="InterPro" id="IPR003683">
    <property type="entry name" value="Cyt_6/f_cplx_su5"/>
</dbReference>
<dbReference type="InterPro" id="IPR036099">
    <property type="entry name" value="Cyt_6/f_cplx_su5_sf"/>
</dbReference>
<dbReference type="NCBIfam" id="NF001907">
    <property type="entry name" value="PRK00665.1"/>
    <property type="match status" value="1"/>
</dbReference>
<dbReference type="Pfam" id="PF02529">
    <property type="entry name" value="PetG"/>
    <property type="match status" value="1"/>
</dbReference>
<dbReference type="PIRSF" id="PIRSF000034">
    <property type="entry name" value="Cyt_b6-f_V"/>
    <property type="match status" value="1"/>
</dbReference>
<dbReference type="SUPFAM" id="SSF103446">
    <property type="entry name" value="PetG subunit of the cytochrome b6f complex"/>
    <property type="match status" value="1"/>
</dbReference>
<comment type="function">
    <text evidence="1">Component of the cytochrome b6-f complex, which mediates electron transfer between photosystem II (PSII) and photosystem I (PSI), cyclic electron flow around PSI, and state transitions. PetG is required for either the stability or assembly of the cytochrome b6-f complex.</text>
</comment>
<comment type="subunit">
    <text evidence="1">The 4 large subunits of the cytochrome b6-f complex are cytochrome b6, subunit IV (17 kDa polypeptide, PetD), cytochrome f and the Rieske protein, while the 4 small subunits are PetG, PetL, PetM and PetN. The complex functions as a dimer.</text>
</comment>
<comment type="subcellular location">
    <subcellularLocation>
        <location evidence="1">Plastid</location>
        <location evidence="1">Chloroplast thylakoid membrane</location>
        <topology evidence="1">Single-pass membrane protein</topology>
    </subcellularLocation>
</comment>
<comment type="similarity">
    <text evidence="1">Belongs to the PetG family.</text>
</comment>
<sequence length="37" mass="4064">MVEPLLSGIVLGMIPVTLAGLFVTAYLQYRRGDQLDL</sequence>
<reference key="1">
    <citation type="journal article" date="2005" name="BMC Biol.">
        <title>The complete chloroplast DNA sequences of the charophycean green algae Staurastrum and Zygnema reveal that the chloroplast genome underwent extensive changes during the evolution of the Zygnematales.</title>
        <authorList>
            <person name="Turmel M."/>
            <person name="Otis C."/>
            <person name="Lemieux C."/>
        </authorList>
    </citation>
    <scope>NUCLEOTIDE SEQUENCE [LARGE SCALE GENOMIC DNA]</scope>
</reference>